<keyword id="KW-0067">ATP-binding</keyword>
<keyword id="KW-0963">Cytoplasm</keyword>
<keyword id="KW-0227">DNA damage</keyword>
<keyword id="KW-0228">DNA excision</keyword>
<keyword id="KW-0234">DNA repair</keyword>
<keyword id="KW-0267">Excision nuclease</keyword>
<keyword id="KW-0347">Helicase</keyword>
<keyword id="KW-0378">Hydrolase</keyword>
<keyword id="KW-0547">Nucleotide-binding</keyword>
<keyword id="KW-0742">SOS response</keyword>
<organism>
    <name type="scientific">Bordetella petrii (strain ATCC BAA-461 / DSM 12804 / CCUG 43448)</name>
    <dbReference type="NCBI Taxonomy" id="340100"/>
    <lineage>
        <taxon>Bacteria</taxon>
        <taxon>Pseudomonadati</taxon>
        <taxon>Pseudomonadota</taxon>
        <taxon>Betaproteobacteria</taxon>
        <taxon>Burkholderiales</taxon>
        <taxon>Alcaligenaceae</taxon>
        <taxon>Bordetella</taxon>
    </lineage>
</organism>
<evidence type="ECO:0000255" key="1">
    <source>
        <dbReference type="HAMAP-Rule" id="MF_00204"/>
    </source>
</evidence>
<protein>
    <recommendedName>
        <fullName evidence="1">UvrABC system protein B</fullName>
        <shortName evidence="1">Protein UvrB</shortName>
    </recommendedName>
    <alternativeName>
        <fullName evidence="1">Excinuclease ABC subunit B</fullName>
    </alternativeName>
</protein>
<reference key="1">
    <citation type="journal article" date="2008" name="BMC Genomics">
        <title>The missing link: Bordetella petrii is endowed with both the metabolic versatility of environmental bacteria and virulence traits of pathogenic Bordetellae.</title>
        <authorList>
            <person name="Gross R."/>
            <person name="Guzman C.A."/>
            <person name="Sebaihia M."/>
            <person name="Martin dos Santos V.A.P."/>
            <person name="Pieper D.H."/>
            <person name="Koebnik R."/>
            <person name="Lechner M."/>
            <person name="Bartels D."/>
            <person name="Buhrmester J."/>
            <person name="Choudhuri J.V."/>
            <person name="Ebensen T."/>
            <person name="Gaigalat L."/>
            <person name="Herrmann S."/>
            <person name="Khachane A.N."/>
            <person name="Larisch C."/>
            <person name="Link S."/>
            <person name="Linke B."/>
            <person name="Meyer F."/>
            <person name="Mormann S."/>
            <person name="Nakunst D."/>
            <person name="Rueckert C."/>
            <person name="Schneiker-Bekel S."/>
            <person name="Schulze K."/>
            <person name="Voerholter F.-J."/>
            <person name="Yevsa T."/>
            <person name="Engle J.T."/>
            <person name="Goldman W.E."/>
            <person name="Puehler A."/>
            <person name="Goebel U.B."/>
            <person name="Goesmann A."/>
            <person name="Bloecker H."/>
            <person name="Kaiser O."/>
            <person name="Martinez-Arias R."/>
        </authorList>
    </citation>
    <scope>NUCLEOTIDE SEQUENCE [LARGE SCALE GENOMIC DNA]</scope>
    <source>
        <strain>ATCC BAA-461 / DSM 12804 / CCUG 43448</strain>
    </source>
</reference>
<accession>A9IR19</accession>
<feature type="chain" id="PRO_1000099539" description="UvrABC system protein B">
    <location>
        <begin position="1"/>
        <end position="675"/>
    </location>
</feature>
<feature type="domain" description="Helicase ATP-binding" evidence="1">
    <location>
        <begin position="35"/>
        <end position="192"/>
    </location>
</feature>
<feature type="domain" description="Helicase C-terminal" evidence="1">
    <location>
        <begin position="439"/>
        <end position="605"/>
    </location>
</feature>
<feature type="domain" description="UVR" evidence="1">
    <location>
        <begin position="633"/>
        <end position="668"/>
    </location>
</feature>
<feature type="short sequence motif" description="Beta-hairpin">
    <location>
        <begin position="101"/>
        <end position="124"/>
    </location>
</feature>
<feature type="binding site" evidence="1">
    <location>
        <begin position="48"/>
        <end position="55"/>
    </location>
    <ligand>
        <name>ATP</name>
        <dbReference type="ChEBI" id="CHEBI:30616"/>
    </ligand>
</feature>
<gene>
    <name evidence="1" type="primary">uvrB</name>
    <name type="ordered locus">Bpet2780</name>
</gene>
<proteinExistence type="inferred from homology"/>
<dbReference type="EMBL" id="AM902716">
    <property type="protein sequence ID" value="CAP43122.1"/>
    <property type="molecule type" value="Genomic_DNA"/>
</dbReference>
<dbReference type="SMR" id="A9IR19"/>
<dbReference type="STRING" id="94624.Bpet2780"/>
<dbReference type="KEGG" id="bpt:Bpet2780"/>
<dbReference type="eggNOG" id="COG0556">
    <property type="taxonomic scope" value="Bacteria"/>
</dbReference>
<dbReference type="Proteomes" id="UP000001225">
    <property type="component" value="Chromosome"/>
</dbReference>
<dbReference type="GO" id="GO:0005737">
    <property type="term" value="C:cytoplasm"/>
    <property type="evidence" value="ECO:0007669"/>
    <property type="project" value="UniProtKB-SubCell"/>
</dbReference>
<dbReference type="GO" id="GO:0009380">
    <property type="term" value="C:excinuclease repair complex"/>
    <property type="evidence" value="ECO:0007669"/>
    <property type="project" value="InterPro"/>
</dbReference>
<dbReference type="GO" id="GO:0005524">
    <property type="term" value="F:ATP binding"/>
    <property type="evidence" value="ECO:0007669"/>
    <property type="project" value="UniProtKB-UniRule"/>
</dbReference>
<dbReference type="GO" id="GO:0016887">
    <property type="term" value="F:ATP hydrolysis activity"/>
    <property type="evidence" value="ECO:0007669"/>
    <property type="project" value="InterPro"/>
</dbReference>
<dbReference type="GO" id="GO:0003677">
    <property type="term" value="F:DNA binding"/>
    <property type="evidence" value="ECO:0007669"/>
    <property type="project" value="UniProtKB-UniRule"/>
</dbReference>
<dbReference type="GO" id="GO:0009381">
    <property type="term" value="F:excinuclease ABC activity"/>
    <property type="evidence" value="ECO:0007669"/>
    <property type="project" value="UniProtKB-UniRule"/>
</dbReference>
<dbReference type="GO" id="GO:0004386">
    <property type="term" value="F:helicase activity"/>
    <property type="evidence" value="ECO:0007669"/>
    <property type="project" value="UniProtKB-KW"/>
</dbReference>
<dbReference type="GO" id="GO:0006289">
    <property type="term" value="P:nucleotide-excision repair"/>
    <property type="evidence" value="ECO:0007669"/>
    <property type="project" value="UniProtKB-UniRule"/>
</dbReference>
<dbReference type="GO" id="GO:0009432">
    <property type="term" value="P:SOS response"/>
    <property type="evidence" value="ECO:0007669"/>
    <property type="project" value="UniProtKB-UniRule"/>
</dbReference>
<dbReference type="CDD" id="cd17916">
    <property type="entry name" value="DEXHc_UvrB"/>
    <property type="match status" value="1"/>
</dbReference>
<dbReference type="CDD" id="cd18790">
    <property type="entry name" value="SF2_C_UvrB"/>
    <property type="match status" value="1"/>
</dbReference>
<dbReference type="FunFam" id="3.40.50.300:FF:000477">
    <property type="entry name" value="UvrABC system protein B"/>
    <property type="match status" value="1"/>
</dbReference>
<dbReference type="Gene3D" id="6.10.140.240">
    <property type="match status" value="1"/>
</dbReference>
<dbReference type="Gene3D" id="3.40.50.300">
    <property type="entry name" value="P-loop containing nucleotide triphosphate hydrolases"/>
    <property type="match status" value="3"/>
</dbReference>
<dbReference type="Gene3D" id="4.10.860.10">
    <property type="entry name" value="UVR domain"/>
    <property type="match status" value="1"/>
</dbReference>
<dbReference type="HAMAP" id="MF_00204">
    <property type="entry name" value="UvrB"/>
    <property type="match status" value="1"/>
</dbReference>
<dbReference type="InterPro" id="IPR006935">
    <property type="entry name" value="Helicase/UvrB_N"/>
</dbReference>
<dbReference type="InterPro" id="IPR014001">
    <property type="entry name" value="Helicase_ATP-bd"/>
</dbReference>
<dbReference type="InterPro" id="IPR001650">
    <property type="entry name" value="Helicase_C-like"/>
</dbReference>
<dbReference type="InterPro" id="IPR027417">
    <property type="entry name" value="P-loop_NTPase"/>
</dbReference>
<dbReference type="InterPro" id="IPR001943">
    <property type="entry name" value="UVR_dom"/>
</dbReference>
<dbReference type="InterPro" id="IPR036876">
    <property type="entry name" value="UVR_dom_sf"/>
</dbReference>
<dbReference type="InterPro" id="IPR004807">
    <property type="entry name" value="UvrB"/>
</dbReference>
<dbReference type="InterPro" id="IPR041471">
    <property type="entry name" value="UvrB_inter"/>
</dbReference>
<dbReference type="InterPro" id="IPR024759">
    <property type="entry name" value="UvrB_YAD/RRR_dom"/>
</dbReference>
<dbReference type="NCBIfam" id="NF003673">
    <property type="entry name" value="PRK05298.1"/>
    <property type="match status" value="1"/>
</dbReference>
<dbReference type="NCBIfam" id="TIGR00631">
    <property type="entry name" value="uvrb"/>
    <property type="match status" value="1"/>
</dbReference>
<dbReference type="PANTHER" id="PTHR24029">
    <property type="entry name" value="UVRABC SYSTEM PROTEIN B"/>
    <property type="match status" value="1"/>
</dbReference>
<dbReference type="PANTHER" id="PTHR24029:SF0">
    <property type="entry name" value="UVRABC SYSTEM PROTEIN B"/>
    <property type="match status" value="1"/>
</dbReference>
<dbReference type="Pfam" id="PF00271">
    <property type="entry name" value="Helicase_C"/>
    <property type="match status" value="1"/>
</dbReference>
<dbReference type="Pfam" id="PF04851">
    <property type="entry name" value="ResIII"/>
    <property type="match status" value="1"/>
</dbReference>
<dbReference type="Pfam" id="PF02151">
    <property type="entry name" value="UVR"/>
    <property type="match status" value="1"/>
</dbReference>
<dbReference type="Pfam" id="PF12344">
    <property type="entry name" value="UvrB"/>
    <property type="match status" value="1"/>
</dbReference>
<dbReference type="Pfam" id="PF17757">
    <property type="entry name" value="UvrB_inter"/>
    <property type="match status" value="1"/>
</dbReference>
<dbReference type="SMART" id="SM00487">
    <property type="entry name" value="DEXDc"/>
    <property type="match status" value="1"/>
</dbReference>
<dbReference type="SMART" id="SM00490">
    <property type="entry name" value="HELICc"/>
    <property type="match status" value="1"/>
</dbReference>
<dbReference type="SUPFAM" id="SSF46600">
    <property type="entry name" value="C-terminal UvrC-binding domain of UvrB"/>
    <property type="match status" value="1"/>
</dbReference>
<dbReference type="SUPFAM" id="SSF52540">
    <property type="entry name" value="P-loop containing nucleoside triphosphate hydrolases"/>
    <property type="match status" value="2"/>
</dbReference>
<dbReference type="PROSITE" id="PS51192">
    <property type="entry name" value="HELICASE_ATP_BIND_1"/>
    <property type="match status" value="1"/>
</dbReference>
<dbReference type="PROSITE" id="PS51194">
    <property type="entry name" value="HELICASE_CTER"/>
    <property type="match status" value="1"/>
</dbReference>
<dbReference type="PROSITE" id="PS50151">
    <property type="entry name" value="UVR"/>
    <property type="match status" value="1"/>
</dbReference>
<name>UVRB_BORPD</name>
<sequence length="675" mass="75938">MTAPGFVDFPDSPFHLYQPYPPAGDQPAAIEGLAQGMRDGLMYQTLLGVTGSGKTYTMANIIARLGRPALVLAPNKTLAAQLYAEMREFFPKNAVEYFVSYYDYYQPEAYVPTRDLFIEKDSSINEHIEQMRLSATKSLLERRDTVIVGTVSCIYGIGNPGDYHAMVLILRAGDRISRREVLARLVAMQYTRNDADFARGTFRVRGETLDIFPAESPELALRLTLFDDEIESLELFDPLTGRVRQKVPRFTVYPGSHYVTPRDTVLRAIETIKEELRDRLKLLTAEGKLVEAQRLEQRTRFDLEMLQELGFCKGIENYSRHLSGAAPGEPPPTLIDYLPADALMFIDESHVTMGQLGGMYRGDRARKETLVQYGFRLPSALDNRPLRLEEFEARMRQCVFVSATPAAYEQEHSDNVVEQVVRPTGLVDPQVEVRPARTQVDDLLGEIKLRVAAQERVLVTTLTKRMAEDLTDFLAEHGVRVRYLHSDIDTVERVEIIRDLRLGTFDVLVGINLLREGLDIPEVSLVAILDADKEGFLRSERSLIQTIGRAARNLNGHAILYADAITASMRRAMDETERRRTKQLAFNAEHGITARGVNKAVRELIDGIVAPARHDTLESAIAPEVLADEKSVAREIRRLEKLMTDHARNLEFEQAAAARDALNALKQRVLLDGAA</sequence>
<comment type="function">
    <text evidence="1">The UvrABC repair system catalyzes the recognition and processing of DNA lesions. A damage recognition complex composed of 2 UvrA and 2 UvrB subunits scans DNA for abnormalities. Upon binding of the UvrA(2)B(2) complex to a putative damaged site, the DNA wraps around one UvrB monomer. DNA wrap is dependent on ATP binding by UvrB and probably causes local melting of the DNA helix, facilitating insertion of UvrB beta-hairpin between the DNA strands. Then UvrB probes one DNA strand for the presence of a lesion. If a lesion is found the UvrA subunits dissociate and the UvrB-DNA preincision complex is formed. This complex is subsequently bound by UvrC and the second UvrB is released. If no lesion is found, the DNA wraps around the other UvrB subunit that will check the other stand for damage.</text>
</comment>
<comment type="subunit">
    <text evidence="1">Forms a heterotetramer with UvrA during the search for lesions. Interacts with UvrC in an incision complex.</text>
</comment>
<comment type="subcellular location">
    <subcellularLocation>
        <location evidence="1">Cytoplasm</location>
    </subcellularLocation>
</comment>
<comment type="domain">
    <text evidence="1">The beta-hairpin motif is involved in DNA binding.</text>
</comment>
<comment type="similarity">
    <text evidence="1">Belongs to the UvrB family.</text>
</comment>